<accession>B9LI32</accession>
<organism>
    <name type="scientific">Chloroflexus aurantiacus (strain ATCC 29364 / DSM 637 / Y-400-fl)</name>
    <dbReference type="NCBI Taxonomy" id="480224"/>
    <lineage>
        <taxon>Bacteria</taxon>
        <taxon>Bacillati</taxon>
        <taxon>Chloroflexota</taxon>
        <taxon>Chloroflexia</taxon>
        <taxon>Chloroflexales</taxon>
        <taxon>Chloroflexineae</taxon>
        <taxon>Chloroflexaceae</taxon>
        <taxon>Chloroflexus</taxon>
    </lineage>
</organism>
<reference key="1">
    <citation type="submission" date="2009-01" db="EMBL/GenBank/DDBJ databases">
        <title>Complete sequence of Chloroflexus sp. Y-400-fl.</title>
        <authorList>
            <consortium name="US DOE Joint Genome Institute"/>
            <person name="Lucas S."/>
            <person name="Copeland A."/>
            <person name="Lapidus A."/>
            <person name="Glavina del Rio T."/>
            <person name="Dalin E."/>
            <person name="Tice H."/>
            <person name="Bruce D."/>
            <person name="Goodwin L."/>
            <person name="Pitluck S."/>
            <person name="Sims D."/>
            <person name="Kiss H."/>
            <person name="Brettin T."/>
            <person name="Detter J.C."/>
            <person name="Han C."/>
            <person name="Larimer F."/>
            <person name="Land M."/>
            <person name="Hauser L."/>
            <person name="Kyrpides N."/>
            <person name="Ovchinnikova G."/>
            <person name="Bryant D.A."/>
            <person name="Richardson P."/>
        </authorList>
    </citation>
    <scope>NUCLEOTIDE SEQUENCE [LARGE SCALE GENOMIC DNA]</scope>
    <source>
        <strain>ATCC 29364 / DSM 637 / Y-400-fl</strain>
    </source>
</reference>
<feature type="chain" id="PRO_1000195783" description="Large ribosomal subunit protein bL12">
    <location>
        <begin position="1"/>
        <end position="132"/>
    </location>
</feature>
<protein>
    <recommendedName>
        <fullName evidence="1">Large ribosomal subunit protein bL12</fullName>
    </recommendedName>
    <alternativeName>
        <fullName evidence="2">50S ribosomal protein L7/L12</fullName>
    </alternativeName>
</protein>
<keyword id="KW-0687">Ribonucleoprotein</keyword>
<keyword id="KW-0689">Ribosomal protein</keyword>
<proteinExistence type="inferred from homology"/>
<gene>
    <name evidence="1" type="primary">rplL</name>
    <name type="ordered locus">Chy400_2357</name>
</gene>
<name>RL7_CHLSY</name>
<evidence type="ECO:0000255" key="1">
    <source>
        <dbReference type="HAMAP-Rule" id="MF_00368"/>
    </source>
</evidence>
<evidence type="ECO:0000305" key="2"/>
<dbReference type="EMBL" id="CP001364">
    <property type="protein sequence ID" value="ACM53752.1"/>
    <property type="molecule type" value="Genomic_DNA"/>
</dbReference>
<dbReference type="SMR" id="B9LI32"/>
<dbReference type="KEGG" id="chl:Chy400_2357"/>
<dbReference type="HOGENOM" id="CLU_086499_3_2_0"/>
<dbReference type="OrthoDB" id="9811748at2"/>
<dbReference type="GO" id="GO:0022625">
    <property type="term" value="C:cytosolic large ribosomal subunit"/>
    <property type="evidence" value="ECO:0007669"/>
    <property type="project" value="TreeGrafter"/>
</dbReference>
<dbReference type="GO" id="GO:0003729">
    <property type="term" value="F:mRNA binding"/>
    <property type="evidence" value="ECO:0007669"/>
    <property type="project" value="TreeGrafter"/>
</dbReference>
<dbReference type="GO" id="GO:0003735">
    <property type="term" value="F:structural constituent of ribosome"/>
    <property type="evidence" value="ECO:0007669"/>
    <property type="project" value="InterPro"/>
</dbReference>
<dbReference type="GO" id="GO:0006412">
    <property type="term" value="P:translation"/>
    <property type="evidence" value="ECO:0007669"/>
    <property type="project" value="UniProtKB-UniRule"/>
</dbReference>
<dbReference type="CDD" id="cd00387">
    <property type="entry name" value="Ribosomal_L7_L12"/>
    <property type="match status" value="1"/>
</dbReference>
<dbReference type="FunFam" id="1.20.5.710:FF:000007">
    <property type="entry name" value="50S ribosomal protein L7/L12"/>
    <property type="match status" value="1"/>
</dbReference>
<dbReference type="FunFam" id="3.30.1390.10:FF:000001">
    <property type="entry name" value="50S ribosomal protein L7/L12"/>
    <property type="match status" value="1"/>
</dbReference>
<dbReference type="Gene3D" id="3.30.1390.10">
    <property type="match status" value="1"/>
</dbReference>
<dbReference type="Gene3D" id="1.20.5.710">
    <property type="entry name" value="Single helix bin"/>
    <property type="match status" value="1"/>
</dbReference>
<dbReference type="HAMAP" id="MF_00368">
    <property type="entry name" value="Ribosomal_bL12"/>
    <property type="match status" value="1"/>
</dbReference>
<dbReference type="InterPro" id="IPR000206">
    <property type="entry name" value="Ribosomal_bL12"/>
</dbReference>
<dbReference type="InterPro" id="IPR013823">
    <property type="entry name" value="Ribosomal_bL12_C"/>
</dbReference>
<dbReference type="InterPro" id="IPR014719">
    <property type="entry name" value="Ribosomal_bL12_C/ClpS-like"/>
</dbReference>
<dbReference type="InterPro" id="IPR008932">
    <property type="entry name" value="Ribosomal_bL12_oligo"/>
</dbReference>
<dbReference type="InterPro" id="IPR036235">
    <property type="entry name" value="Ribosomal_bL12_oligo_N_sf"/>
</dbReference>
<dbReference type="NCBIfam" id="TIGR00855">
    <property type="entry name" value="L12"/>
    <property type="match status" value="1"/>
</dbReference>
<dbReference type="PANTHER" id="PTHR45987">
    <property type="entry name" value="39S RIBOSOMAL PROTEIN L12"/>
    <property type="match status" value="1"/>
</dbReference>
<dbReference type="PANTHER" id="PTHR45987:SF4">
    <property type="entry name" value="LARGE RIBOSOMAL SUBUNIT PROTEIN BL12M"/>
    <property type="match status" value="1"/>
</dbReference>
<dbReference type="Pfam" id="PF00542">
    <property type="entry name" value="Ribosomal_L12"/>
    <property type="match status" value="1"/>
</dbReference>
<dbReference type="Pfam" id="PF16320">
    <property type="entry name" value="Ribosomal_L12_N"/>
    <property type="match status" value="1"/>
</dbReference>
<dbReference type="SUPFAM" id="SSF54736">
    <property type="entry name" value="ClpS-like"/>
    <property type="match status" value="1"/>
</dbReference>
<dbReference type="SUPFAM" id="SSF48300">
    <property type="entry name" value="Ribosomal protein L7/12, oligomerisation (N-terminal) domain"/>
    <property type="match status" value="1"/>
</dbReference>
<comment type="function">
    <text evidence="1">Forms part of the ribosomal stalk which helps the ribosome interact with GTP-bound translation factors. Is thus essential for accurate translation.</text>
</comment>
<comment type="subunit">
    <text evidence="1">Homodimer. Part of the ribosomal stalk of the 50S ribosomal subunit. Forms a multimeric L10(L12)X complex, where L10 forms an elongated spine to which 2 to 4 L12 dimers bind in a sequential fashion. Binds GTP-bound translation factors.</text>
</comment>
<comment type="similarity">
    <text evidence="1">Belongs to the bacterial ribosomal protein bL12 family.</text>
</comment>
<sequence>MSKIDSIIEMIEGLNVLELVELKKKMEEKWGVTAAAPVMAMGAAMPVAAAGDGAAAAAPVEEKTEFDVILKEAGPNKIQVIKVVRELTSLGLKEAKDLVEGAPKPVREGVSKEEAEAAKAKLTEAGAVVEIK</sequence>